<organism>
    <name type="scientific">Haemophilus influenzae (strain ATCC 51907 / DSM 11121 / KW20 / Rd)</name>
    <dbReference type="NCBI Taxonomy" id="71421"/>
    <lineage>
        <taxon>Bacteria</taxon>
        <taxon>Pseudomonadati</taxon>
        <taxon>Pseudomonadota</taxon>
        <taxon>Gammaproteobacteria</taxon>
        <taxon>Pasteurellales</taxon>
        <taxon>Pasteurellaceae</taxon>
        <taxon>Haemophilus</taxon>
    </lineage>
</organism>
<proteinExistence type="inferred from homology"/>
<reference key="1">
    <citation type="submission" date="1992-06" db="EMBL/GenBank/DDBJ databases">
        <title>Characterization and sequence of the lsg locus from Haemophilus influenzae.</title>
        <authorList>
            <person name="McLaughlin R."/>
            <person name="Abu Kwaik Y."/>
            <person name="Young R."/>
            <person name="Spinola S."/>
            <person name="Apicella M."/>
        </authorList>
    </citation>
    <scope>NUCLEOTIDE SEQUENCE [GENOMIC DNA]</scope>
    <source>
        <strain>A2</strain>
    </source>
</reference>
<reference key="2">
    <citation type="journal article" date="1995" name="Science">
        <title>Whole-genome random sequencing and assembly of Haemophilus influenzae Rd.</title>
        <authorList>
            <person name="Fleischmann R.D."/>
            <person name="Adams M.D."/>
            <person name="White O."/>
            <person name="Clayton R.A."/>
            <person name="Kirkness E.F."/>
            <person name="Kerlavage A.R."/>
            <person name="Bult C.J."/>
            <person name="Tomb J.-F."/>
            <person name="Dougherty B.A."/>
            <person name="Merrick J.M."/>
            <person name="McKenney K."/>
            <person name="Sutton G.G."/>
            <person name="FitzHugh W."/>
            <person name="Fields C.A."/>
            <person name="Gocayne J.D."/>
            <person name="Scott J.D."/>
            <person name="Shirley R."/>
            <person name="Liu L.-I."/>
            <person name="Glodek A."/>
            <person name="Kelley J.M."/>
            <person name="Weidman J.F."/>
            <person name="Phillips C.A."/>
            <person name="Spriggs T."/>
            <person name="Hedblom E."/>
            <person name="Cotton M.D."/>
            <person name="Utterback T.R."/>
            <person name="Hanna M.C."/>
            <person name="Nguyen D.T."/>
            <person name="Saudek D.M."/>
            <person name="Brandon R.C."/>
            <person name="Fine L.D."/>
            <person name="Fritchman J.L."/>
            <person name="Fuhrmann J.L."/>
            <person name="Geoghagen N.S.M."/>
            <person name="Gnehm C.L."/>
            <person name="McDonald L.A."/>
            <person name="Small K.V."/>
            <person name="Fraser C.M."/>
            <person name="Smith H.O."/>
            <person name="Venter J.C."/>
        </authorList>
    </citation>
    <scope>NUCLEOTIDE SEQUENCE [LARGE SCALE GENOMIC DNA]</scope>
    <source>
        <strain>ATCC 51907 / DSM 11121 / KW20 / Rd</strain>
    </source>
</reference>
<gene>
    <name type="ordered locus">HI_1695</name>
</gene>
<evidence type="ECO:0000305" key="1"/>
<dbReference type="EC" id="2.4.-.-"/>
<dbReference type="EMBL" id="M94855">
    <property type="protein sequence ID" value="AAA24983.1"/>
    <property type="molecule type" value="Genomic_DNA"/>
</dbReference>
<dbReference type="EMBL" id="L42023">
    <property type="protein sequence ID" value="AAC23341.1"/>
    <property type="molecule type" value="Genomic_DNA"/>
</dbReference>
<dbReference type="PIR" id="C64175">
    <property type="entry name" value="C64175"/>
</dbReference>
<dbReference type="RefSeq" id="NP_439837.2">
    <property type="nucleotide sequence ID" value="NC_000907.1"/>
</dbReference>
<dbReference type="SMR" id="Q48215"/>
<dbReference type="STRING" id="71421.HI_1695"/>
<dbReference type="CAZy" id="GT2">
    <property type="family name" value="Glycosyltransferase Family 2"/>
</dbReference>
<dbReference type="EnsemblBacteria" id="AAC23341">
    <property type="protein sequence ID" value="AAC23341"/>
    <property type="gene ID" value="HI_1695"/>
</dbReference>
<dbReference type="KEGG" id="hin:HI_1695"/>
<dbReference type="PATRIC" id="fig|71421.8.peg.1774"/>
<dbReference type="eggNOG" id="COG1216">
    <property type="taxonomic scope" value="Bacteria"/>
</dbReference>
<dbReference type="HOGENOM" id="CLU_025996_0_9_6"/>
<dbReference type="OrthoDB" id="9801954at2"/>
<dbReference type="PhylomeDB" id="Q48215"/>
<dbReference type="Proteomes" id="UP000000579">
    <property type="component" value="Chromosome"/>
</dbReference>
<dbReference type="GO" id="GO:0016757">
    <property type="term" value="F:glycosyltransferase activity"/>
    <property type="evidence" value="ECO:0007669"/>
    <property type="project" value="UniProtKB-KW"/>
</dbReference>
<dbReference type="CDD" id="cd04195">
    <property type="entry name" value="GT2_AmsE_like"/>
    <property type="match status" value="1"/>
</dbReference>
<dbReference type="Gene3D" id="3.90.550.10">
    <property type="entry name" value="Spore Coat Polysaccharide Biosynthesis Protein SpsA, Chain A"/>
    <property type="match status" value="1"/>
</dbReference>
<dbReference type="InterPro" id="IPR001173">
    <property type="entry name" value="Glyco_trans_2-like"/>
</dbReference>
<dbReference type="InterPro" id="IPR050834">
    <property type="entry name" value="Glycosyltransf_2"/>
</dbReference>
<dbReference type="InterPro" id="IPR029044">
    <property type="entry name" value="Nucleotide-diphossugar_trans"/>
</dbReference>
<dbReference type="PANTHER" id="PTHR43685">
    <property type="entry name" value="GLYCOSYLTRANSFERASE"/>
    <property type="match status" value="1"/>
</dbReference>
<dbReference type="PANTHER" id="PTHR43685:SF5">
    <property type="entry name" value="GLYCOSYLTRANSFERASE EPSE-RELATED"/>
    <property type="match status" value="1"/>
</dbReference>
<dbReference type="Pfam" id="PF00535">
    <property type="entry name" value="Glycos_transf_2"/>
    <property type="match status" value="1"/>
</dbReference>
<dbReference type="SUPFAM" id="SSF53448">
    <property type="entry name" value="Nucleotide-diphospho-sugar transferases"/>
    <property type="match status" value="1"/>
</dbReference>
<accession>Q48215</accession>
<accession>O05081</accession>
<feature type="chain" id="PRO_0000059233" description="Uncharacterized glycosyltransferase HI_1695">
    <location>
        <begin position="1"/>
        <end position="267"/>
    </location>
</feature>
<feature type="sequence conflict" description="In Ref. 1; AAA24983." evidence="1" ref="1">
    <original>V</original>
    <variation>G</variation>
    <location>
        <position position="26"/>
    </location>
</feature>
<feature type="sequence conflict" description="In Ref. 1; AAA24983." evidence="1" ref="1">
    <original>D</original>
    <variation>E</variation>
    <location>
        <position position="46"/>
    </location>
</feature>
<feature type="sequence conflict" description="In Ref. 1; AAA24983." evidence="1" ref="1">
    <original>F</original>
    <variation>S</variation>
    <location>
        <position position="49"/>
    </location>
</feature>
<comment type="similarity">
    <text evidence="1">Belongs to the glycosyltransferase 2 family.</text>
</comment>
<keyword id="KW-0328">Glycosyltransferase</keyword>
<keyword id="KW-1185">Reference proteome</keyword>
<keyword id="KW-0808">Transferase</keyword>
<protein>
    <recommendedName>
        <fullName>Uncharacterized glycosyltransferase HI_1695</fullName>
        <ecNumber>2.4.-.-</ecNumber>
    </recommendedName>
</protein>
<sequence>MKFSVLMSLYIKENPQFLRECFESLVAQTRQADEIVLVFDGVVTPDLEFVVTEFETKLPLKLVKLPQNRGLGKALNEGLLHCDYDWVFRMDTDDICVPDRFEKQVAFIEQHPESIIFGGQIAEFGKNVNDIVAYRNVPTSAQEIIKFTQKRCPFNHMTVAYQKSAVINCGGYEDLQEDYYLWIKLVAQGLYMANLPDILVYARVGNGMVSRRRGVNQAKAEWRLFKLKYRLGIQGLLSGLFTFALRFGSRLLPTSLLKKLYQTFLRK</sequence>
<name>Y1695_HAEIN</name>